<feature type="chain" id="PRO_0000378577" description="RNA-binding protein with serine-rich domain 1">
    <location>
        <begin position="1"/>
        <end position="309"/>
    </location>
</feature>
<feature type="domain" description="RRM" evidence="2">
    <location>
        <begin position="164"/>
        <end position="243"/>
    </location>
</feature>
<feature type="region of interest" description="Disordered" evidence="3">
    <location>
        <begin position="1"/>
        <end position="166"/>
    </location>
</feature>
<feature type="region of interest" description="Disordered" evidence="3">
    <location>
        <begin position="249"/>
        <end position="309"/>
    </location>
</feature>
<feature type="compositionally biased region" description="Basic and acidic residues" evidence="3">
    <location>
        <begin position="1"/>
        <end position="17"/>
    </location>
</feature>
<feature type="compositionally biased region" description="Basic and acidic residues" evidence="3">
    <location>
        <begin position="35"/>
        <end position="61"/>
    </location>
</feature>
<feature type="compositionally biased region" description="Low complexity" evidence="3">
    <location>
        <begin position="70"/>
        <end position="129"/>
    </location>
</feature>
<feature type="compositionally biased region" description="Basic residues" evidence="3">
    <location>
        <begin position="130"/>
        <end position="146"/>
    </location>
</feature>
<feature type="compositionally biased region" description="Basic residues" evidence="3">
    <location>
        <begin position="154"/>
        <end position="166"/>
    </location>
</feature>
<feature type="compositionally biased region" description="Basic residues" evidence="3">
    <location>
        <begin position="270"/>
        <end position="302"/>
    </location>
</feature>
<gene>
    <name type="primary">rnps1</name>
    <name type="ORF">TEgg030c16.1</name>
</gene>
<dbReference type="EMBL" id="CR848461">
    <property type="protein sequence ID" value="CAJ83719.1"/>
    <property type="molecule type" value="mRNA"/>
</dbReference>
<dbReference type="EMBL" id="BC118691">
    <property type="protein sequence ID" value="AAI18692.1"/>
    <property type="status" value="ALT_INIT"/>
    <property type="molecule type" value="mRNA"/>
</dbReference>
<dbReference type="RefSeq" id="NP_001015956.1">
    <property type="nucleotide sequence ID" value="NM_001015956.3"/>
</dbReference>
<dbReference type="SMR" id="Q28E41"/>
<dbReference type="STRING" id="8364.ENSXETP00000013469"/>
<dbReference type="PaxDb" id="8364-ENSXETP00000052845"/>
<dbReference type="GeneID" id="548710"/>
<dbReference type="KEGG" id="xtr:548710"/>
<dbReference type="AGR" id="Xenbase:XB-GENE-941526"/>
<dbReference type="CTD" id="10921"/>
<dbReference type="Xenbase" id="XB-GENE-941526">
    <property type="gene designation" value="rnps1"/>
</dbReference>
<dbReference type="eggNOG" id="KOG4209">
    <property type="taxonomic scope" value="Eukaryota"/>
</dbReference>
<dbReference type="HOGENOM" id="CLU_076438_0_0_1"/>
<dbReference type="InParanoid" id="Q28E41"/>
<dbReference type="OrthoDB" id="252020at2759"/>
<dbReference type="TreeFam" id="TF314165"/>
<dbReference type="Reactome" id="R-XTR-72163">
    <property type="pathway name" value="mRNA Splicing - Major Pathway"/>
</dbReference>
<dbReference type="Reactome" id="R-XTR-975957">
    <property type="pathway name" value="Nonsense Mediated Decay (NMD) enhanced by the Exon Junction Complex (EJC)"/>
</dbReference>
<dbReference type="Proteomes" id="UP000008143">
    <property type="component" value="Chromosome 9"/>
</dbReference>
<dbReference type="GO" id="GO:0005737">
    <property type="term" value="C:cytoplasm"/>
    <property type="evidence" value="ECO:0007669"/>
    <property type="project" value="UniProtKB-SubCell"/>
</dbReference>
<dbReference type="GO" id="GO:0016607">
    <property type="term" value="C:nuclear speck"/>
    <property type="evidence" value="ECO:0007669"/>
    <property type="project" value="UniProtKB-SubCell"/>
</dbReference>
<dbReference type="GO" id="GO:0003723">
    <property type="term" value="F:RNA binding"/>
    <property type="evidence" value="ECO:0007669"/>
    <property type="project" value="UniProtKB-KW"/>
</dbReference>
<dbReference type="GO" id="GO:0006397">
    <property type="term" value="P:mRNA processing"/>
    <property type="evidence" value="ECO:0007669"/>
    <property type="project" value="UniProtKB-KW"/>
</dbReference>
<dbReference type="GO" id="GO:0008380">
    <property type="term" value="P:RNA splicing"/>
    <property type="evidence" value="ECO:0007669"/>
    <property type="project" value="UniProtKB-KW"/>
</dbReference>
<dbReference type="CDD" id="cd12365">
    <property type="entry name" value="RRM_RNPS1"/>
    <property type="match status" value="1"/>
</dbReference>
<dbReference type="Gene3D" id="3.30.70.330">
    <property type="match status" value="1"/>
</dbReference>
<dbReference type="InterPro" id="IPR012677">
    <property type="entry name" value="Nucleotide-bd_a/b_plait_sf"/>
</dbReference>
<dbReference type="InterPro" id="IPR035979">
    <property type="entry name" value="RBD_domain_sf"/>
</dbReference>
<dbReference type="InterPro" id="IPR034201">
    <property type="entry name" value="RNPS1_RRM"/>
</dbReference>
<dbReference type="InterPro" id="IPR000504">
    <property type="entry name" value="RRM_dom"/>
</dbReference>
<dbReference type="PANTHER" id="PTHR15481">
    <property type="entry name" value="RIBONUCLEIC ACID BINDING PROTEIN S1"/>
    <property type="match status" value="1"/>
</dbReference>
<dbReference type="PANTHER" id="PTHR15481:SF2">
    <property type="entry name" value="RNA-BINDING PROTEIN WITH SERINE-RICH DOMAIN 1"/>
    <property type="match status" value="1"/>
</dbReference>
<dbReference type="Pfam" id="PF00076">
    <property type="entry name" value="RRM_1"/>
    <property type="match status" value="1"/>
</dbReference>
<dbReference type="SMART" id="SM00360">
    <property type="entry name" value="RRM"/>
    <property type="match status" value="1"/>
</dbReference>
<dbReference type="SUPFAM" id="SSF54928">
    <property type="entry name" value="RNA-binding domain, RBD"/>
    <property type="match status" value="1"/>
</dbReference>
<dbReference type="PROSITE" id="PS50102">
    <property type="entry name" value="RRM"/>
    <property type="match status" value="1"/>
</dbReference>
<accession>Q28E41</accession>
<accession>Q0VFV0</accession>
<evidence type="ECO:0000250" key="1"/>
<evidence type="ECO:0000255" key="2">
    <source>
        <dbReference type="PROSITE-ProRule" id="PRU00176"/>
    </source>
</evidence>
<evidence type="ECO:0000256" key="3">
    <source>
        <dbReference type="SAM" id="MobiDB-lite"/>
    </source>
</evidence>
<evidence type="ECO:0000305" key="4"/>
<keyword id="KW-0963">Cytoplasm</keyword>
<keyword id="KW-0507">mRNA processing</keyword>
<keyword id="KW-0508">mRNA splicing</keyword>
<keyword id="KW-0539">Nucleus</keyword>
<keyword id="KW-1185">Reference proteome</keyword>
<keyword id="KW-0694">RNA-binding</keyword>
<organism>
    <name type="scientific">Xenopus tropicalis</name>
    <name type="common">Western clawed frog</name>
    <name type="synonym">Silurana tropicalis</name>
    <dbReference type="NCBI Taxonomy" id="8364"/>
    <lineage>
        <taxon>Eukaryota</taxon>
        <taxon>Metazoa</taxon>
        <taxon>Chordata</taxon>
        <taxon>Craniata</taxon>
        <taxon>Vertebrata</taxon>
        <taxon>Euteleostomi</taxon>
        <taxon>Amphibia</taxon>
        <taxon>Batrachia</taxon>
        <taxon>Anura</taxon>
        <taxon>Pipoidea</taxon>
        <taxon>Pipidae</taxon>
        <taxon>Xenopodinae</taxon>
        <taxon>Xenopus</taxon>
        <taxon>Silurana</taxon>
    </lineage>
</organism>
<proteinExistence type="evidence at transcript level"/>
<name>RNPS1_XENTR</name>
<comment type="function">
    <text evidence="1">Component of a splicing-dependent multiprotein exon junction complex (EJC) deposited at splice junction on mRNAs. The EJC is a dynamic structure consisting of a few core proteins and several more peripheral nuclear and cytoplasmic associated factors that join the complex only transiently either during EJC assembly or during subsequent mRNA metabolism. Putative component of the spliceosome which enhances the formation of the ATP-dependent A complex of the spliceosome. May participate in mRNA 3'-end cleavage. Also mediates increase of mRNA abundance and translational efficiency (By similarity).</text>
</comment>
<comment type="subunit">
    <text evidence="1">Component of the active spliceosome.</text>
</comment>
<comment type="subcellular location">
    <subcellularLocation>
        <location evidence="1">Nucleus</location>
    </subcellularLocation>
    <subcellularLocation>
        <location evidence="1">Nucleus speckle</location>
    </subcellularLocation>
    <subcellularLocation>
        <location evidence="1">Cytoplasm</location>
    </subcellularLocation>
    <text evidence="1">Nucleocytoplasmic shuttling protein.</text>
</comment>
<comment type="similarity">
    <text evidence="4">Belongs to the splicing factor SR family.</text>
</comment>
<comment type="caution">
    <text evidence="4">It is uncertain whether Met-1 or Met-26 is the initiator.</text>
</comment>
<comment type="sequence caution" evidence="4">
    <conflict type="erroneous initiation">
        <sequence resource="EMBL-CDS" id="AAI18692"/>
    </conflict>
</comment>
<protein>
    <recommendedName>
        <fullName>RNA-binding protein with serine-rich domain 1</fullName>
    </recommendedName>
</protein>
<reference key="1">
    <citation type="submission" date="2006-10" db="EMBL/GenBank/DDBJ databases">
        <authorList>
            <consortium name="Sanger Xenopus tropicalis EST/cDNA project"/>
        </authorList>
    </citation>
    <scope>NUCLEOTIDE SEQUENCE [LARGE SCALE MRNA]</scope>
    <source>
        <tissue>Egg</tissue>
    </source>
</reference>
<reference key="2">
    <citation type="submission" date="2006-07" db="EMBL/GenBank/DDBJ databases">
        <authorList>
            <consortium name="NIH - Xenopus Gene Collection (XGC) project"/>
        </authorList>
    </citation>
    <scope>NUCLEOTIDE SEQUENCE [LARGE SCALE MRNA] OF 20-309</scope>
    <source>
        <tissue>Testis</tissue>
    </source>
</reference>
<sequence>MAATRHNERDGLSDLRRDRQRKSGKMAPSPSKRKERSEDRAKDRGKEKAPGKEGTDKDRGRDKARKRRSASSGSSSSSRSRSSSSSSSSSGSSSGSSSGSSSSSASSRSGSSSSSRSSSSSSSSGSPSPSRRRHDNRRRSRSKSKQPKRDEKERKRRSPSPRPTKVHIGRLTRNVTKDHILEIFSTYGKIKMIDMPVDRYHPHLSKGYAYVEFEAPEEAEKALKHMDGGQIDGQEITASAVLTPWPMRAMPRRFSPPRRMLPPPPMWRRSPPRMRRRSRSPRRRSPVRRRSRSPARRRHRSRSSSNSSR</sequence>